<comment type="catalytic activity">
    <reaction evidence="1">
        <text>D-arabinose 5-phosphate + phosphoenolpyruvate + H2O = 3-deoxy-alpha-D-manno-2-octulosonate-8-phosphate + phosphate</text>
        <dbReference type="Rhea" id="RHEA:14053"/>
        <dbReference type="ChEBI" id="CHEBI:15377"/>
        <dbReference type="ChEBI" id="CHEBI:43474"/>
        <dbReference type="ChEBI" id="CHEBI:57693"/>
        <dbReference type="ChEBI" id="CHEBI:58702"/>
        <dbReference type="ChEBI" id="CHEBI:85985"/>
        <dbReference type="EC" id="2.5.1.55"/>
    </reaction>
</comment>
<comment type="pathway">
    <text evidence="1">Carbohydrate biosynthesis; 3-deoxy-D-manno-octulosonate biosynthesis; 3-deoxy-D-manno-octulosonate from D-ribulose 5-phosphate: step 2/3.</text>
</comment>
<comment type="pathway">
    <text evidence="1">Bacterial outer membrane biogenesis; lipopolysaccharide biosynthesis.</text>
</comment>
<comment type="subcellular location">
    <subcellularLocation>
        <location evidence="1">Cytoplasm</location>
    </subcellularLocation>
</comment>
<comment type="similarity">
    <text evidence="1">Belongs to the KdsA family.</text>
</comment>
<keyword id="KW-0963">Cytoplasm</keyword>
<keyword id="KW-0448">Lipopolysaccharide biosynthesis</keyword>
<keyword id="KW-0808">Transferase</keyword>
<evidence type="ECO:0000255" key="1">
    <source>
        <dbReference type="HAMAP-Rule" id="MF_00056"/>
    </source>
</evidence>
<sequence>MKQKVVNIGDIKVANDLPFVLFGGMNVLESRDLAMRICEHYVTVTQKLGIPYVFKASFDKANRSSIHSYRGPGLEEGMKIFQELKQTFGVKVITDVHEASQAQPVADVVDVIQLPAFLARQTDLVEAMAKTGAVINVKKPQFVSPGQMGNIVDKFHEGGNDKVILCDRGANFGYDNLVVDMLGFSVMKKVSGNSPVIFDVTHALQCRDPFGAASGGRRGQVTELARAGMAVGLAGLFLESHPDPANAKCDGPSALPLAKLEQFLTQIKAIDDLVKSFDELDTEN</sequence>
<proteinExistence type="inferred from homology"/>
<accession>B5FU23</accession>
<feature type="chain" id="PRO_1000091830" description="2-dehydro-3-deoxyphosphooctonate aldolase">
    <location>
        <begin position="1"/>
        <end position="284"/>
    </location>
</feature>
<organism>
    <name type="scientific">Salmonella dublin (strain CT_02021853)</name>
    <dbReference type="NCBI Taxonomy" id="439851"/>
    <lineage>
        <taxon>Bacteria</taxon>
        <taxon>Pseudomonadati</taxon>
        <taxon>Pseudomonadota</taxon>
        <taxon>Gammaproteobacteria</taxon>
        <taxon>Enterobacterales</taxon>
        <taxon>Enterobacteriaceae</taxon>
        <taxon>Salmonella</taxon>
    </lineage>
</organism>
<protein>
    <recommendedName>
        <fullName evidence="1">2-dehydro-3-deoxyphosphooctonate aldolase</fullName>
        <ecNumber evidence="1">2.5.1.55</ecNumber>
    </recommendedName>
    <alternativeName>
        <fullName evidence="1">3-deoxy-D-manno-octulosonic acid 8-phosphate synthase</fullName>
    </alternativeName>
    <alternativeName>
        <fullName evidence="1">KDO-8-phosphate synthase</fullName>
        <shortName evidence="1">KDO 8-P synthase</shortName>
        <shortName evidence="1">KDOPS</shortName>
    </alternativeName>
    <alternativeName>
        <fullName evidence="1">Phospho-2-dehydro-3-deoxyoctonate aldolase</fullName>
    </alternativeName>
</protein>
<dbReference type="EC" id="2.5.1.55" evidence="1"/>
<dbReference type="EMBL" id="CP001144">
    <property type="protein sequence ID" value="ACH75415.1"/>
    <property type="molecule type" value="Genomic_DNA"/>
</dbReference>
<dbReference type="RefSeq" id="WP_000811046.1">
    <property type="nucleotide sequence ID" value="NC_011205.1"/>
</dbReference>
<dbReference type="SMR" id="B5FU23"/>
<dbReference type="KEGG" id="sed:SeD_A1551"/>
<dbReference type="HOGENOM" id="CLU_036666_0_0_6"/>
<dbReference type="UniPathway" id="UPA00030"/>
<dbReference type="UniPathway" id="UPA00357">
    <property type="reaction ID" value="UER00474"/>
</dbReference>
<dbReference type="Proteomes" id="UP000008322">
    <property type="component" value="Chromosome"/>
</dbReference>
<dbReference type="GO" id="GO:0005737">
    <property type="term" value="C:cytoplasm"/>
    <property type="evidence" value="ECO:0007669"/>
    <property type="project" value="UniProtKB-SubCell"/>
</dbReference>
<dbReference type="GO" id="GO:0008676">
    <property type="term" value="F:3-deoxy-8-phosphooctulonate synthase activity"/>
    <property type="evidence" value="ECO:0007669"/>
    <property type="project" value="UniProtKB-UniRule"/>
</dbReference>
<dbReference type="GO" id="GO:0019294">
    <property type="term" value="P:keto-3-deoxy-D-manno-octulosonic acid biosynthetic process"/>
    <property type="evidence" value="ECO:0007669"/>
    <property type="project" value="UniProtKB-UniRule"/>
</dbReference>
<dbReference type="FunFam" id="3.20.20.70:FF:000058">
    <property type="entry name" value="2-dehydro-3-deoxyphosphooctonate aldolase"/>
    <property type="match status" value="1"/>
</dbReference>
<dbReference type="Gene3D" id="3.20.20.70">
    <property type="entry name" value="Aldolase class I"/>
    <property type="match status" value="1"/>
</dbReference>
<dbReference type="HAMAP" id="MF_00056">
    <property type="entry name" value="KDO8P_synth"/>
    <property type="match status" value="1"/>
</dbReference>
<dbReference type="InterPro" id="IPR013785">
    <property type="entry name" value="Aldolase_TIM"/>
</dbReference>
<dbReference type="InterPro" id="IPR006218">
    <property type="entry name" value="DAHP1/KDSA"/>
</dbReference>
<dbReference type="InterPro" id="IPR006269">
    <property type="entry name" value="KDO8P_synthase"/>
</dbReference>
<dbReference type="NCBIfam" id="TIGR01362">
    <property type="entry name" value="KDO8P_synth"/>
    <property type="match status" value="1"/>
</dbReference>
<dbReference type="NCBIfam" id="NF003543">
    <property type="entry name" value="PRK05198.1"/>
    <property type="match status" value="1"/>
</dbReference>
<dbReference type="NCBIfam" id="NF009109">
    <property type="entry name" value="PRK12457.1"/>
    <property type="match status" value="1"/>
</dbReference>
<dbReference type="PANTHER" id="PTHR21057">
    <property type="entry name" value="PHOSPHO-2-DEHYDRO-3-DEOXYHEPTONATE ALDOLASE"/>
    <property type="match status" value="1"/>
</dbReference>
<dbReference type="Pfam" id="PF00793">
    <property type="entry name" value="DAHP_synth_1"/>
    <property type="match status" value="1"/>
</dbReference>
<dbReference type="SUPFAM" id="SSF51569">
    <property type="entry name" value="Aldolase"/>
    <property type="match status" value="1"/>
</dbReference>
<reference key="1">
    <citation type="journal article" date="2011" name="J. Bacteriol.">
        <title>Comparative genomics of 28 Salmonella enterica isolates: evidence for CRISPR-mediated adaptive sublineage evolution.</title>
        <authorList>
            <person name="Fricke W.F."/>
            <person name="Mammel M.K."/>
            <person name="McDermott P.F."/>
            <person name="Tartera C."/>
            <person name="White D.G."/>
            <person name="Leclerc J.E."/>
            <person name="Ravel J."/>
            <person name="Cebula T.A."/>
        </authorList>
    </citation>
    <scope>NUCLEOTIDE SEQUENCE [LARGE SCALE GENOMIC DNA]</scope>
    <source>
        <strain>CT_02021853</strain>
    </source>
</reference>
<gene>
    <name evidence="1" type="primary">kdsA</name>
    <name type="ordered locus">SeD_A1551</name>
</gene>
<name>KDSA_SALDC</name>